<reference key="1">
    <citation type="journal article" date="2007" name="PLoS Genet.">
        <title>Meningococcal genetic variation mechanisms viewed through comparative analysis of serogroup C strain FAM18.</title>
        <authorList>
            <person name="Bentley S.D."/>
            <person name="Vernikos G.S."/>
            <person name="Snyder L.A.S."/>
            <person name="Churcher C."/>
            <person name="Arrowsmith C."/>
            <person name="Chillingworth T."/>
            <person name="Cronin A."/>
            <person name="Davis P.H."/>
            <person name="Holroyd N.E."/>
            <person name="Jagels K."/>
            <person name="Maddison M."/>
            <person name="Moule S."/>
            <person name="Rabbinowitsch E."/>
            <person name="Sharp S."/>
            <person name="Unwin L."/>
            <person name="Whitehead S."/>
            <person name="Quail M.A."/>
            <person name="Achtman M."/>
            <person name="Barrell B.G."/>
            <person name="Saunders N.J."/>
            <person name="Parkhill J."/>
        </authorList>
    </citation>
    <scope>NUCLEOTIDE SEQUENCE [LARGE SCALE GENOMIC DNA]</scope>
    <source>
        <strain>ATCC 700532 / DSM 15464 / FAM18</strain>
    </source>
</reference>
<proteinExistence type="inferred from homology"/>
<gene>
    <name evidence="1" type="primary">nuoD</name>
    <name type="ordered locus">NMC0240</name>
</gene>
<keyword id="KW-0997">Cell inner membrane</keyword>
<keyword id="KW-1003">Cell membrane</keyword>
<keyword id="KW-0472">Membrane</keyword>
<keyword id="KW-0520">NAD</keyword>
<keyword id="KW-0874">Quinone</keyword>
<keyword id="KW-1278">Translocase</keyword>
<keyword id="KW-0813">Transport</keyword>
<keyword id="KW-0830">Ubiquinone</keyword>
<feature type="chain" id="PRO_0000357870" description="NADH-quinone oxidoreductase subunit D">
    <location>
        <begin position="1"/>
        <end position="418"/>
    </location>
</feature>
<organism>
    <name type="scientific">Neisseria meningitidis serogroup C / serotype 2a (strain ATCC 700532 / DSM 15464 / FAM18)</name>
    <dbReference type="NCBI Taxonomy" id="272831"/>
    <lineage>
        <taxon>Bacteria</taxon>
        <taxon>Pseudomonadati</taxon>
        <taxon>Pseudomonadota</taxon>
        <taxon>Betaproteobacteria</taxon>
        <taxon>Neisseriales</taxon>
        <taxon>Neisseriaceae</taxon>
        <taxon>Neisseria</taxon>
    </lineage>
</organism>
<protein>
    <recommendedName>
        <fullName evidence="1">NADH-quinone oxidoreductase subunit D</fullName>
        <ecNumber evidence="1">7.1.1.-</ecNumber>
    </recommendedName>
    <alternativeName>
        <fullName evidence="1">NADH dehydrogenase I subunit D</fullName>
    </alternativeName>
    <alternativeName>
        <fullName evidence="1">NDH-1 subunit D</fullName>
    </alternativeName>
</protein>
<evidence type="ECO:0000255" key="1">
    <source>
        <dbReference type="HAMAP-Rule" id="MF_01358"/>
    </source>
</evidence>
<comment type="function">
    <text evidence="1">NDH-1 shuttles electrons from NADH, via FMN and iron-sulfur (Fe-S) centers, to quinones in the respiratory chain. The immediate electron acceptor for the enzyme in this species is believed to be ubiquinone. Couples the redox reaction to proton translocation (for every two electrons transferred, four hydrogen ions are translocated across the cytoplasmic membrane), and thus conserves the redox energy in a proton gradient.</text>
</comment>
<comment type="catalytic activity">
    <reaction evidence="1">
        <text>a quinone + NADH + 5 H(+)(in) = a quinol + NAD(+) + 4 H(+)(out)</text>
        <dbReference type="Rhea" id="RHEA:57888"/>
        <dbReference type="ChEBI" id="CHEBI:15378"/>
        <dbReference type="ChEBI" id="CHEBI:24646"/>
        <dbReference type="ChEBI" id="CHEBI:57540"/>
        <dbReference type="ChEBI" id="CHEBI:57945"/>
        <dbReference type="ChEBI" id="CHEBI:132124"/>
    </reaction>
</comment>
<comment type="subunit">
    <text evidence="1">NDH-1 is composed of 14 different subunits. Subunits NuoB, C, D, E, F, and G constitute the peripheral sector of the complex.</text>
</comment>
<comment type="subcellular location">
    <subcellularLocation>
        <location evidence="1">Cell inner membrane</location>
        <topology evidence="1">Peripheral membrane protein</topology>
        <orientation evidence="1">Cytoplasmic side</orientation>
    </subcellularLocation>
</comment>
<comment type="similarity">
    <text evidence="1">Belongs to the complex I 49 kDa subunit family.</text>
</comment>
<name>NUOD_NEIMF</name>
<dbReference type="EC" id="7.1.1.-" evidence="1"/>
<dbReference type="EMBL" id="AM421808">
    <property type="protein sequence ID" value="CAM09554.1"/>
    <property type="molecule type" value="Genomic_DNA"/>
</dbReference>
<dbReference type="RefSeq" id="WP_002221612.1">
    <property type="nucleotide sequence ID" value="NC_008767.1"/>
</dbReference>
<dbReference type="SMR" id="A1KRS5"/>
<dbReference type="KEGG" id="nmc:NMC0240"/>
<dbReference type="HOGENOM" id="CLU_015134_1_1_4"/>
<dbReference type="Proteomes" id="UP000002286">
    <property type="component" value="Chromosome"/>
</dbReference>
<dbReference type="GO" id="GO:0005886">
    <property type="term" value="C:plasma membrane"/>
    <property type="evidence" value="ECO:0007669"/>
    <property type="project" value="UniProtKB-SubCell"/>
</dbReference>
<dbReference type="GO" id="GO:0051287">
    <property type="term" value="F:NAD binding"/>
    <property type="evidence" value="ECO:0007669"/>
    <property type="project" value="InterPro"/>
</dbReference>
<dbReference type="GO" id="GO:0050136">
    <property type="term" value="F:NADH:ubiquinone reductase (non-electrogenic) activity"/>
    <property type="evidence" value="ECO:0007669"/>
    <property type="project" value="UniProtKB-UniRule"/>
</dbReference>
<dbReference type="GO" id="GO:0048038">
    <property type="term" value="F:quinone binding"/>
    <property type="evidence" value="ECO:0007669"/>
    <property type="project" value="UniProtKB-KW"/>
</dbReference>
<dbReference type="FunFam" id="1.10.645.10:FF:000005">
    <property type="entry name" value="NADH-quinone oxidoreductase subunit D"/>
    <property type="match status" value="1"/>
</dbReference>
<dbReference type="Gene3D" id="1.10.645.10">
    <property type="entry name" value="Cytochrome-c3 Hydrogenase, chain B"/>
    <property type="match status" value="1"/>
</dbReference>
<dbReference type="HAMAP" id="MF_01358">
    <property type="entry name" value="NDH1_NuoD"/>
    <property type="match status" value="1"/>
</dbReference>
<dbReference type="InterPro" id="IPR001135">
    <property type="entry name" value="NADH_Q_OxRdtase_suD"/>
</dbReference>
<dbReference type="InterPro" id="IPR014029">
    <property type="entry name" value="NADH_UbQ_OxRdtase_49kDa_CS"/>
</dbReference>
<dbReference type="InterPro" id="IPR022885">
    <property type="entry name" value="NDH1_su_D/H"/>
</dbReference>
<dbReference type="InterPro" id="IPR029014">
    <property type="entry name" value="NiFe-Hase_large"/>
</dbReference>
<dbReference type="NCBIfam" id="TIGR01962">
    <property type="entry name" value="NuoD"/>
    <property type="match status" value="1"/>
</dbReference>
<dbReference type="NCBIfam" id="NF004739">
    <property type="entry name" value="PRK06075.1"/>
    <property type="match status" value="1"/>
</dbReference>
<dbReference type="PANTHER" id="PTHR11993:SF10">
    <property type="entry name" value="NADH DEHYDROGENASE [UBIQUINONE] IRON-SULFUR PROTEIN 2, MITOCHONDRIAL"/>
    <property type="match status" value="1"/>
</dbReference>
<dbReference type="PANTHER" id="PTHR11993">
    <property type="entry name" value="NADH-UBIQUINONE OXIDOREDUCTASE 49 KDA SUBUNIT"/>
    <property type="match status" value="1"/>
</dbReference>
<dbReference type="Pfam" id="PF00346">
    <property type="entry name" value="Complex1_49kDa"/>
    <property type="match status" value="1"/>
</dbReference>
<dbReference type="SUPFAM" id="SSF56762">
    <property type="entry name" value="HydB/Nqo4-like"/>
    <property type="match status" value="1"/>
</dbReference>
<dbReference type="PROSITE" id="PS00535">
    <property type="entry name" value="COMPLEX1_49K"/>
    <property type="match status" value="1"/>
</dbReference>
<accession>A1KRS5</accession>
<sequence>MANKLRNYTINFGPQHPAAHGVLRMILELEGETIVRADPHIGLLHRGTEKLAETKTYLQALPYMDRLDYVSMMVNEQAYCLAVEKLAGIDVPIRAQYIRVMFAEVTRILNHLMGIGSHAFDIGAMTAILYAFRDREELMDLYEAVSGARMHAAYFRPGGVYRDLPDFMPKYESSKFRNAKVLKQLNESREGTMLDFIDAFCERFPKNIDTLETLLTDNRIWKQRTVGIGVVSPERAMQKGFTGVMLRGSGVEWDVRKTQPYEVYDKMDFDIPVGVNGDCYDRYLCRMEEMRQSVRIIKQCSEWLRVNPGPVITTNHKFAPPKRTEMKTGMEDLIHHFKLFTEGMHVPEGETYTAVEHPKGEFGVYIISDGANKPYRLKIRAPGFAHLQGMDEMAKGHMLADVVAIIGTQDIVFGEVDR</sequence>